<protein>
    <recommendedName>
        <fullName evidence="1">Chorismate synthase</fullName>
        <shortName evidence="1">CS</shortName>
        <ecNumber evidence="1">4.2.3.5</ecNumber>
    </recommendedName>
    <alternativeName>
        <fullName evidence="1">5-enolpyruvylshikimate-3-phosphate phospholyase</fullName>
    </alternativeName>
</protein>
<dbReference type="EC" id="4.2.3.5" evidence="1"/>
<dbReference type="EMBL" id="CP000252">
    <property type="protein sequence ID" value="ABC77691.1"/>
    <property type="molecule type" value="Genomic_DNA"/>
</dbReference>
<dbReference type="RefSeq" id="WP_011417713.1">
    <property type="nucleotide sequence ID" value="NC_007759.1"/>
</dbReference>
<dbReference type="SMR" id="Q2LUC8"/>
<dbReference type="FunCoup" id="Q2LUC8">
    <property type="interactions" value="425"/>
</dbReference>
<dbReference type="STRING" id="56780.SYN_01934"/>
<dbReference type="KEGG" id="sat:SYN_01934"/>
<dbReference type="eggNOG" id="COG0082">
    <property type="taxonomic scope" value="Bacteria"/>
</dbReference>
<dbReference type="HOGENOM" id="CLU_034547_0_0_7"/>
<dbReference type="InParanoid" id="Q2LUC8"/>
<dbReference type="OrthoDB" id="9771806at2"/>
<dbReference type="UniPathway" id="UPA00053">
    <property type="reaction ID" value="UER00090"/>
</dbReference>
<dbReference type="Proteomes" id="UP000001933">
    <property type="component" value="Chromosome"/>
</dbReference>
<dbReference type="GO" id="GO:0005829">
    <property type="term" value="C:cytosol"/>
    <property type="evidence" value="ECO:0007669"/>
    <property type="project" value="TreeGrafter"/>
</dbReference>
<dbReference type="GO" id="GO:0004107">
    <property type="term" value="F:chorismate synthase activity"/>
    <property type="evidence" value="ECO:0007669"/>
    <property type="project" value="UniProtKB-UniRule"/>
</dbReference>
<dbReference type="GO" id="GO:0010181">
    <property type="term" value="F:FMN binding"/>
    <property type="evidence" value="ECO:0007669"/>
    <property type="project" value="TreeGrafter"/>
</dbReference>
<dbReference type="GO" id="GO:0008652">
    <property type="term" value="P:amino acid biosynthetic process"/>
    <property type="evidence" value="ECO:0007669"/>
    <property type="project" value="UniProtKB-KW"/>
</dbReference>
<dbReference type="GO" id="GO:0009073">
    <property type="term" value="P:aromatic amino acid family biosynthetic process"/>
    <property type="evidence" value="ECO:0007669"/>
    <property type="project" value="UniProtKB-KW"/>
</dbReference>
<dbReference type="GO" id="GO:0009423">
    <property type="term" value="P:chorismate biosynthetic process"/>
    <property type="evidence" value="ECO:0007669"/>
    <property type="project" value="UniProtKB-UniRule"/>
</dbReference>
<dbReference type="CDD" id="cd07304">
    <property type="entry name" value="Chorismate_synthase"/>
    <property type="match status" value="1"/>
</dbReference>
<dbReference type="Gene3D" id="3.60.150.10">
    <property type="entry name" value="Chorismate synthase AroC"/>
    <property type="match status" value="1"/>
</dbReference>
<dbReference type="HAMAP" id="MF_00300">
    <property type="entry name" value="Chorismate_synth"/>
    <property type="match status" value="1"/>
</dbReference>
<dbReference type="InterPro" id="IPR000453">
    <property type="entry name" value="Chorismate_synth"/>
</dbReference>
<dbReference type="InterPro" id="IPR035904">
    <property type="entry name" value="Chorismate_synth_AroC_sf"/>
</dbReference>
<dbReference type="InterPro" id="IPR020541">
    <property type="entry name" value="Chorismate_synthase_CS"/>
</dbReference>
<dbReference type="NCBIfam" id="TIGR00033">
    <property type="entry name" value="aroC"/>
    <property type="match status" value="1"/>
</dbReference>
<dbReference type="NCBIfam" id="NF003793">
    <property type="entry name" value="PRK05382.1"/>
    <property type="match status" value="1"/>
</dbReference>
<dbReference type="PANTHER" id="PTHR21085">
    <property type="entry name" value="CHORISMATE SYNTHASE"/>
    <property type="match status" value="1"/>
</dbReference>
<dbReference type="PANTHER" id="PTHR21085:SF0">
    <property type="entry name" value="CHORISMATE SYNTHASE"/>
    <property type="match status" value="1"/>
</dbReference>
<dbReference type="Pfam" id="PF01264">
    <property type="entry name" value="Chorismate_synt"/>
    <property type="match status" value="1"/>
</dbReference>
<dbReference type="PIRSF" id="PIRSF001456">
    <property type="entry name" value="Chorismate_synth"/>
    <property type="match status" value="1"/>
</dbReference>
<dbReference type="SUPFAM" id="SSF103263">
    <property type="entry name" value="Chorismate synthase, AroC"/>
    <property type="match status" value="1"/>
</dbReference>
<dbReference type="PROSITE" id="PS00787">
    <property type="entry name" value="CHORISMATE_SYNTHASE_1"/>
    <property type="match status" value="1"/>
</dbReference>
<dbReference type="PROSITE" id="PS00788">
    <property type="entry name" value="CHORISMATE_SYNTHASE_2"/>
    <property type="match status" value="1"/>
</dbReference>
<dbReference type="PROSITE" id="PS00789">
    <property type="entry name" value="CHORISMATE_SYNTHASE_3"/>
    <property type="match status" value="1"/>
</dbReference>
<accession>Q2LUC8</accession>
<gene>
    <name evidence="1" type="primary">aroC</name>
    <name type="ordered locus">SYNAS_18120</name>
    <name type="ORF">SYN_01934</name>
</gene>
<comment type="function">
    <text evidence="1">Catalyzes the anti-1,4-elimination of the C-3 phosphate and the C-6 proR hydrogen from 5-enolpyruvylshikimate-3-phosphate (EPSP) to yield chorismate, which is the branch point compound that serves as the starting substrate for the three terminal pathways of aromatic amino acid biosynthesis. This reaction introduces a second double bond into the aromatic ring system.</text>
</comment>
<comment type="catalytic activity">
    <reaction evidence="1">
        <text>5-O-(1-carboxyvinyl)-3-phosphoshikimate = chorismate + phosphate</text>
        <dbReference type="Rhea" id="RHEA:21020"/>
        <dbReference type="ChEBI" id="CHEBI:29748"/>
        <dbReference type="ChEBI" id="CHEBI:43474"/>
        <dbReference type="ChEBI" id="CHEBI:57701"/>
        <dbReference type="EC" id="4.2.3.5"/>
    </reaction>
</comment>
<comment type="cofactor">
    <cofactor evidence="1">
        <name>FMNH2</name>
        <dbReference type="ChEBI" id="CHEBI:57618"/>
    </cofactor>
    <text evidence="1">Reduced FMN (FMNH(2)).</text>
</comment>
<comment type="pathway">
    <text evidence="1">Metabolic intermediate biosynthesis; chorismate biosynthesis; chorismate from D-erythrose 4-phosphate and phosphoenolpyruvate: step 7/7.</text>
</comment>
<comment type="subunit">
    <text evidence="1">Homotetramer.</text>
</comment>
<comment type="similarity">
    <text evidence="1">Belongs to the chorismate synthase family.</text>
</comment>
<sequence length="354" mass="36571">MSGNTIGNVFRVTTWGESHGGAIGAVIDGCPPGLGLSEQHIQAALDRRKPGVGAFATPRQETDRIEILSGVFEGRTTGTPIALLIRNRDANSGAYDGLRNIFRPGHGDYTYFKKYGLRDHRGGGRASGRETAARVAAGAVAALVTAAAGIDVLAYTIALGGVSISESGTTVNRESLANPLCCPDQEAARRMTGRLEEARNAGDSLGGIVGIVVRGCPAGLGEPVFDKMDAQLAGALMSIGTVKGVEIGAGFAVAGMKGSESNDPLSPGGFLANASGGILAGITNGEQINMRVACKPIPSISRSQKTVDREGNPVTLSIGGRHDVCVIPRIIPVCEAMVQIVLADFLLRQKAVTL</sequence>
<name>AROC_SYNAS</name>
<keyword id="KW-0028">Amino-acid biosynthesis</keyword>
<keyword id="KW-0057">Aromatic amino acid biosynthesis</keyword>
<keyword id="KW-0274">FAD</keyword>
<keyword id="KW-0285">Flavoprotein</keyword>
<keyword id="KW-0288">FMN</keyword>
<keyword id="KW-0456">Lyase</keyword>
<keyword id="KW-0521">NADP</keyword>
<keyword id="KW-1185">Reference proteome</keyword>
<reference key="1">
    <citation type="journal article" date="2007" name="Proc. Natl. Acad. Sci. U.S.A.">
        <title>The genome of Syntrophus aciditrophicus: life at the thermodynamic limit of microbial growth.</title>
        <authorList>
            <person name="McInerney M.J."/>
            <person name="Rohlin L."/>
            <person name="Mouttaki H."/>
            <person name="Kim U."/>
            <person name="Krupp R.S."/>
            <person name="Rios-Hernandez L."/>
            <person name="Sieber J."/>
            <person name="Struchtemeyer C.G."/>
            <person name="Bhattacharyya A."/>
            <person name="Campbell J.W."/>
            <person name="Gunsalus R.P."/>
        </authorList>
    </citation>
    <scope>NUCLEOTIDE SEQUENCE [LARGE SCALE GENOMIC DNA]</scope>
    <source>
        <strain>SB</strain>
    </source>
</reference>
<feature type="chain" id="PRO_0000256350" description="Chorismate synthase">
    <location>
        <begin position="1"/>
        <end position="354"/>
    </location>
</feature>
<feature type="binding site" evidence="1">
    <location>
        <position position="48"/>
    </location>
    <ligand>
        <name>NADP(+)</name>
        <dbReference type="ChEBI" id="CHEBI:58349"/>
    </ligand>
</feature>
<feature type="binding site" evidence="1">
    <location>
        <begin position="125"/>
        <end position="127"/>
    </location>
    <ligand>
        <name>FMN</name>
        <dbReference type="ChEBI" id="CHEBI:58210"/>
    </ligand>
</feature>
<feature type="binding site" evidence="1">
    <location>
        <position position="280"/>
    </location>
    <ligand>
        <name>FMN</name>
        <dbReference type="ChEBI" id="CHEBI:58210"/>
    </ligand>
</feature>
<feature type="binding site" evidence="1">
    <location>
        <begin position="295"/>
        <end position="299"/>
    </location>
    <ligand>
        <name>FMN</name>
        <dbReference type="ChEBI" id="CHEBI:58210"/>
    </ligand>
</feature>
<feature type="binding site" evidence="1">
    <location>
        <position position="321"/>
    </location>
    <ligand>
        <name>FMN</name>
        <dbReference type="ChEBI" id="CHEBI:58210"/>
    </ligand>
</feature>
<evidence type="ECO:0000255" key="1">
    <source>
        <dbReference type="HAMAP-Rule" id="MF_00300"/>
    </source>
</evidence>
<proteinExistence type="inferred from homology"/>
<organism>
    <name type="scientific">Syntrophus aciditrophicus (strain SB)</name>
    <dbReference type="NCBI Taxonomy" id="56780"/>
    <lineage>
        <taxon>Bacteria</taxon>
        <taxon>Pseudomonadati</taxon>
        <taxon>Thermodesulfobacteriota</taxon>
        <taxon>Syntrophia</taxon>
        <taxon>Syntrophales</taxon>
        <taxon>Syntrophaceae</taxon>
        <taxon>Syntrophus</taxon>
    </lineage>
</organism>